<dbReference type="EC" id="3.4.21.92" evidence="1"/>
<dbReference type="EMBL" id="AE017340">
    <property type="protein sequence ID" value="AAV81845.1"/>
    <property type="molecule type" value="Genomic_DNA"/>
</dbReference>
<dbReference type="RefSeq" id="WP_011234256.1">
    <property type="nucleotide sequence ID" value="NC_006512.1"/>
</dbReference>
<dbReference type="SMR" id="Q5QXN8"/>
<dbReference type="STRING" id="283942.IL1005"/>
<dbReference type="MEROPS" id="S14.001"/>
<dbReference type="GeneID" id="78251650"/>
<dbReference type="KEGG" id="ilo:IL1005"/>
<dbReference type="eggNOG" id="COG0740">
    <property type="taxonomic scope" value="Bacteria"/>
</dbReference>
<dbReference type="HOGENOM" id="CLU_058707_3_2_6"/>
<dbReference type="OrthoDB" id="9802800at2"/>
<dbReference type="Proteomes" id="UP000001171">
    <property type="component" value="Chromosome"/>
</dbReference>
<dbReference type="GO" id="GO:0005737">
    <property type="term" value="C:cytoplasm"/>
    <property type="evidence" value="ECO:0007669"/>
    <property type="project" value="UniProtKB-SubCell"/>
</dbReference>
<dbReference type="GO" id="GO:0009368">
    <property type="term" value="C:endopeptidase Clp complex"/>
    <property type="evidence" value="ECO:0007669"/>
    <property type="project" value="TreeGrafter"/>
</dbReference>
<dbReference type="GO" id="GO:0004176">
    <property type="term" value="F:ATP-dependent peptidase activity"/>
    <property type="evidence" value="ECO:0007669"/>
    <property type="project" value="InterPro"/>
</dbReference>
<dbReference type="GO" id="GO:0051117">
    <property type="term" value="F:ATPase binding"/>
    <property type="evidence" value="ECO:0007669"/>
    <property type="project" value="TreeGrafter"/>
</dbReference>
<dbReference type="GO" id="GO:0004252">
    <property type="term" value="F:serine-type endopeptidase activity"/>
    <property type="evidence" value="ECO:0007669"/>
    <property type="project" value="UniProtKB-UniRule"/>
</dbReference>
<dbReference type="GO" id="GO:0006515">
    <property type="term" value="P:protein quality control for misfolded or incompletely synthesized proteins"/>
    <property type="evidence" value="ECO:0007669"/>
    <property type="project" value="TreeGrafter"/>
</dbReference>
<dbReference type="CDD" id="cd07017">
    <property type="entry name" value="S14_ClpP_2"/>
    <property type="match status" value="1"/>
</dbReference>
<dbReference type="FunFam" id="3.90.226.10:FF:000001">
    <property type="entry name" value="ATP-dependent Clp protease proteolytic subunit"/>
    <property type="match status" value="1"/>
</dbReference>
<dbReference type="Gene3D" id="3.90.226.10">
    <property type="entry name" value="2-enoyl-CoA Hydratase, Chain A, domain 1"/>
    <property type="match status" value="1"/>
</dbReference>
<dbReference type="HAMAP" id="MF_00444">
    <property type="entry name" value="ClpP"/>
    <property type="match status" value="1"/>
</dbReference>
<dbReference type="InterPro" id="IPR001907">
    <property type="entry name" value="ClpP"/>
</dbReference>
<dbReference type="InterPro" id="IPR029045">
    <property type="entry name" value="ClpP/crotonase-like_dom_sf"/>
</dbReference>
<dbReference type="InterPro" id="IPR023562">
    <property type="entry name" value="ClpP/TepA"/>
</dbReference>
<dbReference type="InterPro" id="IPR033135">
    <property type="entry name" value="ClpP_His_AS"/>
</dbReference>
<dbReference type="InterPro" id="IPR018215">
    <property type="entry name" value="ClpP_Ser_AS"/>
</dbReference>
<dbReference type="NCBIfam" id="TIGR00493">
    <property type="entry name" value="clpP"/>
    <property type="match status" value="1"/>
</dbReference>
<dbReference type="NCBIfam" id="NF001368">
    <property type="entry name" value="PRK00277.1"/>
    <property type="match status" value="1"/>
</dbReference>
<dbReference type="NCBIfam" id="NF009205">
    <property type="entry name" value="PRK12553.1"/>
    <property type="match status" value="1"/>
</dbReference>
<dbReference type="PANTHER" id="PTHR10381">
    <property type="entry name" value="ATP-DEPENDENT CLP PROTEASE PROTEOLYTIC SUBUNIT"/>
    <property type="match status" value="1"/>
</dbReference>
<dbReference type="PANTHER" id="PTHR10381:SF70">
    <property type="entry name" value="ATP-DEPENDENT CLP PROTEASE PROTEOLYTIC SUBUNIT"/>
    <property type="match status" value="1"/>
</dbReference>
<dbReference type="Pfam" id="PF00574">
    <property type="entry name" value="CLP_protease"/>
    <property type="match status" value="1"/>
</dbReference>
<dbReference type="PRINTS" id="PR00127">
    <property type="entry name" value="CLPPROTEASEP"/>
</dbReference>
<dbReference type="SUPFAM" id="SSF52096">
    <property type="entry name" value="ClpP/crotonase"/>
    <property type="match status" value="1"/>
</dbReference>
<dbReference type="PROSITE" id="PS00382">
    <property type="entry name" value="CLP_PROTEASE_HIS"/>
    <property type="match status" value="1"/>
</dbReference>
<dbReference type="PROSITE" id="PS00381">
    <property type="entry name" value="CLP_PROTEASE_SER"/>
    <property type="match status" value="1"/>
</dbReference>
<proteinExistence type="inferred from homology"/>
<name>CLPP_IDILO</name>
<sequence>MSSDIQDPMAQLVPMVVEQTSKGERSYDIYSRLLKERVIFCCGQVEDHMANLIVAQLLFLESDNPDKDIYLYINSPGGVVTAGMAIYDTMRFIKPDVSTVCMGQAASMGAFLLAGGAQGKRYCLPNSRVMIHQPLGGFQGQASDFEIHAKQILDLKERLNRMLAENTGQDYEKVARDTDRDHFLSAEESIDYGLVDGILRQRGEES</sequence>
<gene>
    <name evidence="1" type="primary">clpP</name>
    <name type="ordered locus">IL1005</name>
</gene>
<comment type="function">
    <text evidence="1">Cleaves peptides in various proteins in a process that requires ATP hydrolysis. Has a chymotrypsin-like activity. Plays a major role in the degradation of misfolded proteins.</text>
</comment>
<comment type="catalytic activity">
    <reaction evidence="1">
        <text>Hydrolysis of proteins to small peptides in the presence of ATP and magnesium. alpha-casein is the usual test substrate. In the absence of ATP, only oligopeptides shorter than five residues are hydrolyzed (such as succinyl-Leu-Tyr-|-NHMec, and Leu-Tyr-Leu-|-Tyr-Trp, in which cleavage of the -Tyr-|-Leu- and -Tyr-|-Trp bonds also occurs).</text>
        <dbReference type="EC" id="3.4.21.92"/>
    </reaction>
</comment>
<comment type="subunit">
    <text evidence="1">Fourteen ClpP subunits assemble into 2 heptameric rings which stack back to back to give a disk-like structure with a central cavity, resembling the structure of eukaryotic proteasomes.</text>
</comment>
<comment type="subcellular location">
    <subcellularLocation>
        <location evidence="1">Cytoplasm</location>
    </subcellularLocation>
</comment>
<comment type="similarity">
    <text evidence="1">Belongs to the peptidase S14 family.</text>
</comment>
<organism>
    <name type="scientific">Idiomarina loihiensis (strain ATCC BAA-735 / DSM 15497 / L2-TR)</name>
    <dbReference type="NCBI Taxonomy" id="283942"/>
    <lineage>
        <taxon>Bacteria</taxon>
        <taxon>Pseudomonadati</taxon>
        <taxon>Pseudomonadota</taxon>
        <taxon>Gammaproteobacteria</taxon>
        <taxon>Alteromonadales</taxon>
        <taxon>Idiomarinaceae</taxon>
        <taxon>Idiomarina</taxon>
    </lineage>
</organism>
<keyword id="KW-0963">Cytoplasm</keyword>
<keyword id="KW-0378">Hydrolase</keyword>
<keyword id="KW-0645">Protease</keyword>
<keyword id="KW-1185">Reference proteome</keyword>
<keyword id="KW-0720">Serine protease</keyword>
<reference key="1">
    <citation type="journal article" date="2004" name="Proc. Natl. Acad. Sci. U.S.A.">
        <title>Genome sequence of the deep-sea gamma-proteobacterium Idiomarina loihiensis reveals amino acid fermentation as a source of carbon and energy.</title>
        <authorList>
            <person name="Hou S."/>
            <person name="Saw J.H."/>
            <person name="Lee K.S."/>
            <person name="Freitas T.A."/>
            <person name="Belisle C."/>
            <person name="Kawarabayasi Y."/>
            <person name="Donachie S.P."/>
            <person name="Pikina A."/>
            <person name="Galperin M.Y."/>
            <person name="Koonin E.V."/>
            <person name="Makarova K.S."/>
            <person name="Omelchenko M.V."/>
            <person name="Sorokin A."/>
            <person name="Wolf Y.I."/>
            <person name="Li Q.X."/>
            <person name="Keum Y.S."/>
            <person name="Campbell S."/>
            <person name="Denery J."/>
            <person name="Aizawa S."/>
            <person name="Shibata S."/>
            <person name="Malahoff A."/>
            <person name="Alam M."/>
        </authorList>
    </citation>
    <scope>NUCLEOTIDE SEQUENCE [LARGE SCALE GENOMIC DNA]</scope>
    <source>
        <strain>ATCC BAA-735 / DSM 15497 / L2-TR</strain>
    </source>
</reference>
<accession>Q5QXN8</accession>
<feature type="chain" id="PRO_0000179570" description="ATP-dependent Clp protease proteolytic subunit">
    <location>
        <begin position="1"/>
        <end position="206"/>
    </location>
</feature>
<feature type="active site" description="Nucleophile" evidence="1">
    <location>
        <position position="107"/>
    </location>
</feature>
<feature type="active site" evidence="1">
    <location>
        <position position="132"/>
    </location>
</feature>
<protein>
    <recommendedName>
        <fullName evidence="1">ATP-dependent Clp protease proteolytic subunit</fullName>
        <ecNumber evidence="1">3.4.21.92</ecNumber>
    </recommendedName>
    <alternativeName>
        <fullName evidence="1">Endopeptidase Clp</fullName>
    </alternativeName>
</protein>
<evidence type="ECO:0000255" key="1">
    <source>
        <dbReference type="HAMAP-Rule" id="MF_00444"/>
    </source>
</evidence>